<evidence type="ECO:0000250" key="1">
    <source>
        <dbReference type="UniProtKB" id="G8YXZ9"/>
    </source>
</evidence>
<evidence type="ECO:0000269" key="2">
    <source>
    </source>
</evidence>
<evidence type="ECO:0000269" key="3">
    <source>
    </source>
</evidence>
<evidence type="ECO:0000303" key="4">
    <source>
    </source>
</evidence>
<evidence type="ECO:0000305" key="5"/>
<evidence type="ECO:0000312" key="6">
    <source>
        <dbReference type="EMBL" id="ACK80599.1"/>
    </source>
</evidence>
<evidence type="ECO:0007829" key="7">
    <source>
        <dbReference type="PDB" id="6L8A"/>
    </source>
</evidence>
<evidence type="ECO:0007829" key="8">
    <source>
        <dbReference type="PDB" id="7CQY"/>
    </source>
</evidence>
<gene>
    <name evidence="4" type="primary">tth</name>
    <name evidence="6" type="synonym">tetH</name>
    <name evidence="6" type="ordered locus">AFE_0029</name>
</gene>
<reference key="1">
    <citation type="journal article" date="2007" name="J. Biotechnol.">
        <title>Identification of a gene encoding a tetrathionate hydrolase in Acidithiobacillus ferrooxidans.</title>
        <authorList>
            <person name="Kanao T."/>
            <person name="Kamimura K."/>
            <person name="Sugio T."/>
        </authorList>
    </citation>
    <scope>NUCLEOTIDE SEQUENCE [GENOMIC DNA]</scope>
    <scope>PROTEIN SEQUENCE OF 33-45</scope>
    <scope>FUNCTION</scope>
    <scope>CATALYTIC ACTIVITY</scope>
    <scope>BIOPHYSICOCHEMICAL PROPERTIES</scope>
    <scope>SUBUNIT</scope>
    <scope>SUBCELLULAR LOCATION</scope>
    <source>
        <strain>ATCC 23270 / DSM 14882 / CIP 104768 / NCIMB 8455</strain>
    </source>
</reference>
<reference key="2">
    <citation type="journal article" date="2008" name="BMC Genomics">
        <title>Acidithiobacillus ferrooxidans metabolism: from genome sequence to industrial applications.</title>
        <authorList>
            <person name="Valdes J."/>
            <person name="Pedroso I."/>
            <person name="Quatrini R."/>
            <person name="Dodson R.J."/>
            <person name="Tettelin H."/>
            <person name="Blake R. II"/>
            <person name="Eisen J.A."/>
            <person name="Holmes D.S."/>
        </authorList>
    </citation>
    <scope>NUCLEOTIDE SEQUENCE [LARGE SCALE GENOMIC DNA]</scope>
    <source>
        <strain>ATCC 23270 / DSM 14882 / CIP 104768 / NCIMB 8455</strain>
    </source>
</reference>
<reference key="3">
    <citation type="journal article" date="2014" name="Biosci. Biotechnol. Biochem.">
        <title>The sole cysteine residue (Cys301) of tetrathionate hydrolase from Acidithiobacillus ferrooxidans does not play a role in enzyme activity.</title>
        <authorList>
            <person name="Kanao T."/>
            <person name="Nakayama H."/>
            <person name="Kato M."/>
            <person name="Kamimura K."/>
        </authorList>
    </citation>
    <scope>FUNCTION</scope>
    <scope>CATALYTIC ACTIVITY</scope>
    <scope>SUBUNIT</scope>
    <scope>MUTAGENESIS OF CYS-301</scope>
    <source>
        <strain>ATCC 23270 / DSM 14882 / CIP 104768 / NCIMB 8455</strain>
    </source>
</reference>
<reference key="4">
    <citation type="journal article" date="2013" name="Acta Crystallogr. F">
        <title>Crystallization and preliminary X-ray diffraction analysis of tetrathionate hydrolase from Acidithiobacillus ferrooxidans.</title>
        <authorList>
            <person name="Kanao T."/>
            <person name="Kosaka M."/>
            <person name="Yoshida K."/>
            <person name="Nakayama H."/>
            <person name="Tamada T."/>
            <person name="Kuroki R."/>
            <person name="Yamada H."/>
            <person name="Takada J."/>
            <person name="Kamimura K."/>
        </authorList>
    </citation>
    <scope>CRYSTALLIZATION</scope>
    <source>
        <strain>ATCC 23270 / DSM 14882 / CIP 104768 / NCIMB 8455</strain>
    </source>
</reference>
<proteinExistence type="evidence at protein level"/>
<sequence length="499" mass="53133">MPSIVRNHGPHNKILLSALLLALFGWVPLASAAVAVPMDSTGPYRTVSHPENAPSGVDAGVGPSEWTHAYANPAHNAAFPVPDDAPEWIRNGVSWLFPEARAWPLANPPFGSKTYGAAEASVTQTQFYGNALGPSVVDGVVYAESDDMFAYAVNAKTGKLIWRASPVGNNLMGNPLVIGNTVYLSAGSVAFNFANVLRYAHNPSASARGLNVSFNGIYALNRSNGKLLWYFATPGETMATPAYDNNTLFIADGAGNAFGINATTGKQVWKTHVGGMDNMSSVTAYRHNIYFAMAIKPYLYCLNESNGHIVWKGTIPGASNTGIGDVSPAAADGVVVLDATTKPQANKKAMFSNVIRAFDAKTGAVLWTRNMGSGGKIPAFKGGVPMIHNNIVYVGNPVASTYQAYELKTGKLLWTWHVPTKVAAGAGRSAPTYYKGLLYITTGQYIFVVNPATGKELHQHHIGGQFGIESPVIVGGTVYLTNSWDWIMAIPLKTISHGS</sequence>
<keyword id="KW-0002">3D-structure</keyword>
<keyword id="KW-1003">Cell membrane</keyword>
<keyword id="KW-0903">Direct protein sequencing</keyword>
<keyword id="KW-0378">Hydrolase</keyword>
<keyword id="KW-0472">Membrane</keyword>
<keyword id="KW-1185">Reference proteome</keyword>
<keyword id="KW-0732">Signal</keyword>
<organism>
    <name type="scientific">Acidithiobacillus ferrooxidans (strain ATCC 23270 / DSM 14882 / CIP 104768 / NCIMB 8455)</name>
    <name type="common">Ferrobacillus ferrooxidans (strain ATCC 23270)</name>
    <dbReference type="NCBI Taxonomy" id="243159"/>
    <lineage>
        <taxon>Bacteria</taxon>
        <taxon>Pseudomonadati</taxon>
        <taxon>Pseudomonadota</taxon>
        <taxon>Acidithiobacillia</taxon>
        <taxon>Acidithiobacillales</taxon>
        <taxon>Acidithiobacillaceae</taxon>
        <taxon>Acidithiobacillus</taxon>
    </lineage>
</organism>
<dbReference type="EC" id="3.12.1.-" evidence="2 3"/>
<dbReference type="EMBL" id="AB259312">
    <property type="protein sequence ID" value="BAF03501.1"/>
    <property type="molecule type" value="Genomic_DNA"/>
</dbReference>
<dbReference type="EMBL" id="CP001219">
    <property type="protein sequence ID" value="ACK80599.1"/>
    <property type="molecule type" value="Genomic_DNA"/>
</dbReference>
<dbReference type="RefSeq" id="WP_012535754.1">
    <property type="nucleotide sequence ID" value="NC_011761.1"/>
</dbReference>
<dbReference type="PDB" id="6L8A">
    <property type="method" value="X-ray"/>
    <property type="resolution" value="1.95 A"/>
    <property type="chains" value="A/B/C/D/E/F=33-499"/>
</dbReference>
<dbReference type="PDB" id="7CQY">
    <property type="method" value="X-ray"/>
    <property type="resolution" value="2.80 A"/>
    <property type="chains" value="A/B/C/D/E/F=33-499"/>
</dbReference>
<dbReference type="PDBsum" id="6L8A"/>
<dbReference type="PDBsum" id="7CQY"/>
<dbReference type="SMR" id="B7J3C9"/>
<dbReference type="STRING" id="243159.AFE_0029"/>
<dbReference type="PaxDb" id="243159-AFE_0029"/>
<dbReference type="GeneID" id="65279428"/>
<dbReference type="KEGG" id="afr:AFE_0029"/>
<dbReference type="eggNOG" id="COG1520">
    <property type="taxonomic scope" value="Bacteria"/>
</dbReference>
<dbReference type="HOGENOM" id="CLU_030956_0_0_6"/>
<dbReference type="BioCyc" id="MetaCyc:MONOMER-15073"/>
<dbReference type="BRENDA" id="3.12.1.B1">
    <property type="organism ID" value="91"/>
</dbReference>
<dbReference type="Proteomes" id="UP000001362">
    <property type="component" value="Chromosome"/>
</dbReference>
<dbReference type="GO" id="GO:0005886">
    <property type="term" value="C:plasma membrane"/>
    <property type="evidence" value="ECO:0007669"/>
    <property type="project" value="UniProtKB-SubCell"/>
</dbReference>
<dbReference type="GO" id="GO:0016787">
    <property type="term" value="F:hydrolase activity"/>
    <property type="evidence" value="ECO:0007669"/>
    <property type="project" value="UniProtKB-KW"/>
</dbReference>
<dbReference type="Gene3D" id="2.130.10.10">
    <property type="entry name" value="YVTN repeat-like/Quinoprotein amine dehydrogenase"/>
    <property type="match status" value="2"/>
</dbReference>
<dbReference type="InterPro" id="IPR018391">
    <property type="entry name" value="PQQ_b-propeller_rpt"/>
</dbReference>
<dbReference type="InterPro" id="IPR002372">
    <property type="entry name" value="PQQ_rpt_dom"/>
</dbReference>
<dbReference type="InterPro" id="IPR011047">
    <property type="entry name" value="Quinoprotein_ADH-like_sf"/>
</dbReference>
<dbReference type="InterPro" id="IPR015943">
    <property type="entry name" value="WD40/YVTN_repeat-like_dom_sf"/>
</dbReference>
<dbReference type="PANTHER" id="PTHR34512">
    <property type="entry name" value="CELL SURFACE PROTEIN"/>
    <property type="match status" value="1"/>
</dbReference>
<dbReference type="PANTHER" id="PTHR34512:SF30">
    <property type="entry name" value="OUTER MEMBRANE PROTEIN ASSEMBLY FACTOR BAMB"/>
    <property type="match status" value="1"/>
</dbReference>
<dbReference type="Pfam" id="PF13360">
    <property type="entry name" value="PQQ_2"/>
    <property type="match status" value="2"/>
</dbReference>
<dbReference type="SMART" id="SM00564">
    <property type="entry name" value="PQQ"/>
    <property type="match status" value="6"/>
</dbReference>
<dbReference type="SUPFAM" id="SSF50998">
    <property type="entry name" value="Quinoprotein alcohol dehydrogenase-like"/>
    <property type="match status" value="2"/>
</dbReference>
<protein>
    <recommendedName>
        <fullName evidence="4">Tetrathionate hydrolase</fullName>
        <shortName evidence="4">4THase</shortName>
        <shortName evidence="1">TTH</shortName>
        <ecNumber evidence="2 3">3.12.1.-</ecNumber>
    </recommendedName>
</protein>
<feature type="signal peptide" evidence="2">
    <location>
        <begin position="1"/>
        <end position="32"/>
    </location>
</feature>
<feature type="chain" id="PRO_5002854957" description="Tetrathionate hydrolase">
    <location>
        <begin position="33"/>
        <end position="499"/>
    </location>
</feature>
<feature type="mutagenesis site" description="No change in activity. Does not affect dimerization." evidence="3">
    <original>C</original>
    <variation>A</variation>
    <location>
        <position position="301"/>
    </location>
</feature>
<feature type="helix" evidence="7">
    <location>
        <begin position="50"/>
        <end position="52"/>
    </location>
</feature>
<feature type="helix" evidence="7">
    <location>
        <begin position="56"/>
        <end position="60"/>
    </location>
</feature>
<feature type="helix" evidence="7">
    <location>
        <begin position="87"/>
        <end position="91"/>
    </location>
</feature>
<feature type="strand" evidence="7">
    <location>
        <begin position="95"/>
        <end position="98"/>
    </location>
</feature>
<feature type="helix" evidence="7">
    <location>
        <begin position="112"/>
        <end position="115"/>
    </location>
</feature>
<feature type="helix" evidence="7">
    <location>
        <begin position="117"/>
        <end position="128"/>
    </location>
</feature>
<feature type="strand" evidence="7">
    <location>
        <begin position="135"/>
        <end position="137"/>
    </location>
</feature>
<feature type="strand" evidence="7">
    <location>
        <begin position="140"/>
        <end position="144"/>
    </location>
</feature>
<feature type="strand" evidence="7">
    <location>
        <begin position="150"/>
        <end position="154"/>
    </location>
</feature>
<feature type="turn" evidence="7">
    <location>
        <begin position="155"/>
        <end position="157"/>
    </location>
</feature>
<feature type="strand" evidence="7">
    <location>
        <begin position="160"/>
        <end position="164"/>
    </location>
</feature>
<feature type="strand" evidence="7">
    <location>
        <begin position="166"/>
        <end position="169"/>
    </location>
</feature>
<feature type="strand" evidence="7">
    <location>
        <begin position="176"/>
        <end position="178"/>
    </location>
</feature>
<feature type="strand" evidence="7">
    <location>
        <begin position="181"/>
        <end position="186"/>
    </location>
</feature>
<feature type="helix" evidence="7">
    <location>
        <begin position="197"/>
        <end position="201"/>
    </location>
</feature>
<feature type="helix" evidence="8">
    <location>
        <begin position="203"/>
        <end position="205"/>
    </location>
</feature>
<feature type="turn" evidence="7">
    <location>
        <begin position="209"/>
        <end position="211"/>
    </location>
</feature>
<feature type="strand" evidence="7">
    <location>
        <begin position="215"/>
        <end position="221"/>
    </location>
</feature>
<feature type="turn" evidence="7">
    <location>
        <begin position="222"/>
        <end position="224"/>
    </location>
</feature>
<feature type="strand" evidence="7">
    <location>
        <begin position="227"/>
        <end position="235"/>
    </location>
</feature>
<feature type="strand" evidence="7">
    <location>
        <begin position="242"/>
        <end position="244"/>
    </location>
</feature>
<feature type="strand" evidence="7">
    <location>
        <begin position="247"/>
        <end position="251"/>
    </location>
</feature>
<feature type="strand" evidence="7">
    <location>
        <begin position="255"/>
        <end position="261"/>
    </location>
</feature>
<feature type="turn" evidence="7">
    <location>
        <begin position="262"/>
        <end position="264"/>
    </location>
</feature>
<feature type="strand" evidence="7">
    <location>
        <begin position="267"/>
        <end position="272"/>
    </location>
</feature>
<feature type="strand" evidence="7">
    <location>
        <begin position="283"/>
        <end position="285"/>
    </location>
</feature>
<feature type="strand" evidence="7">
    <location>
        <begin position="288"/>
        <end position="294"/>
    </location>
</feature>
<feature type="turn" evidence="7">
    <location>
        <begin position="295"/>
        <end position="297"/>
    </location>
</feature>
<feature type="strand" evidence="7">
    <location>
        <begin position="298"/>
        <end position="303"/>
    </location>
</feature>
<feature type="turn" evidence="7">
    <location>
        <begin position="304"/>
        <end position="306"/>
    </location>
</feature>
<feature type="strand" evidence="7">
    <location>
        <begin position="309"/>
        <end position="313"/>
    </location>
</feature>
<feature type="turn" evidence="7">
    <location>
        <begin position="320"/>
        <end position="322"/>
    </location>
</feature>
<feature type="helix" evidence="7">
    <location>
        <begin position="323"/>
        <end position="325"/>
    </location>
</feature>
<feature type="strand" evidence="7">
    <location>
        <begin position="329"/>
        <end position="331"/>
    </location>
</feature>
<feature type="strand" evidence="7">
    <location>
        <begin position="334"/>
        <end position="341"/>
    </location>
</feature>
<feature type="strand" evidence="7">
    <location>
        <begin position="351"/>
        <end position="359"/>
    </location>
</feature>
<feature type="turn" evidence="7">
    <location>
        <begin position="360"/>
        <end position="362"/>
    </location>
</feature>
<feature type="strand" evidence="7">
    <location>
        <begin position="365"/>
        <end position="370"/>
    </location>
</feature>
<feature type="strand" evidence="7">
    <location>
        <begin position="386"/>
        <end position="388"/>
    </location>
</feature>
<feature type="strand" evidence="7">
    <location>
        <begin position="391"/>
        <end position="396"/>
    </location>
</feature>
<feature type="turn" evidence="7">
    <location>
        <begin position="397"/>
        <end position="400"/>
    </location>
</feature>
<feature type="strand" evidence="7">
    <location>
        <begin position="401"/>
        <end position="406"/>
    </location>
</feature>
<feature type="turn" evidence="7">
    <location>
        <begin position="407"/>
        <end position="409"/>
    </location>
</feature>
<feature type="strand" evidence="7">
    <location>
        <begin position="412"/>
        <end position="417"/>
    </location>
</feature>
<feature type="turn" evidence="8">
    <location>
        <begin position="423"/>
        <end position="427"/>
    </location>
</feature>
<feature type="strand" evidence="7">
    <location>
        <begin position="432"/>
        <end position="434"/>
    </location>
</feature>
<feature type="strand" evidence="7">
    <location>
        <begin position="437"/>
        <end position="442"/>
    </location>
</feature>
<feature type="strand" evidence="7">
    <location>
        <begin position="445"/>
        <end position="449"/>
    </location>
</feature>
<feature type="turn" evidence="7">
    <location>
        <begin position="451"/>
        <end position="453"/>
    </location>
</feature>
<feature type="strand" evidence="7">
    <location>
        <begin position="456"/>
        <end position="461"/>
    </location>
</feature>
<feature type="strand" evidence="7">
    <location>
        <begin position="472"/>
        <end position="474"/>
    </location>
</feature>
<feature type="strand" evidence="7">
    <location>
        <begin position="477"/>
        <end position="481"/>
    </location>
</feature>
<feature type="strand" evidence="7">
    <location>
        <begin position="485"/>
        <end position="491"/>
    </location>
</feature>
<feature type="helix" evidence="7">
    <location>
        <begin position="492"/>
        <end position="495"/>
    </location>
</feature>
<name>TTH_ACIF2</name>
<comment type="function">
    <text evidence="2 3">Catalyzes the hydrolysis of tetrathionate to generate elemental sulfur, thiosulfate and sulfate.</text>
</comment>
<comment type="catalytic activity">
    <reaction evidence="2 3">
        <text>tetrathionate + H2O = sulfur + thiosulfate + sulfate + H(+)</text>
        <dbReference type="Rhea" id="RHEA:13541"/>
        <dbReference type="ChEBI" id="CHEBI:15226"/>
        <dbReference type="ChEBI" id="CHEBI:15377"/>
        <dbReference type="ChEBI" id="CHEBI:15378"/>
        <dbReference type="ChEBI" id="CHEBI:16189"/>
        <dbReference type="ChEBI" id="CHEBI:26833"/>
        <dbReference type="ChEBI" id="CHEBI:33542"/>
    </reaction>
</comment>
<comment type="biophysicochemical properties">
    <phDependence>
        <text evidence="2">Optimum pH is 3.0.</text>
    </phDependence>
    <temperatureDependence>
        <text evidence="2">Optimum temperature is 60 degrees Celsius.</text>
    </temperatureDependence>
</comment>
<comment type="subunit">
    <text evidence="2 3">Homodimer.</text>
</comment>
<comment type="subcellular location">
    <subcellularLocation>
        <location evidence="2">Cell membrane</location>
    </subcellularLocation>
    <text evidence="2">Membrane-associated.</text>
</comment>
<comment type="similarity">
    <text evidence="5">Belongs to the tetrathionate hydrolase family.</text>
</comment>
<accession>B7J3C9</accession>
<accession>Q0KK37</accession>